<gene>
    <name type="primary">dnaK</name>
</gene>
<reference key="1">
    <citation type="journal article" date="2000" name="J. Mol. Evol.">
        <title>The structure and gene repertoire of an ancient red algal plastid genome.</title>
        <authorList>
            <person name="Gloeckner G."/>
            <person name="Rosenthal A."/>
            <person name="Valentin K.-U."/>
        </authorList>
    </citation>
    <scope>NUCLEOTIDE SEQUENCE [LARGE SCALE GENOMIC DNA]</scope>
    <source>
        <strain>RK-1</strain>
    </source>
</reference>
<sequence length="618" mass="68192">MEKIVGIDLGTTNSVIAVMEMGKPAVIPNSEGFRTTPSVVAYAKNGDLLVGQIAKRQAVINPSNTFYSVKRFIGRKFEEINEENRQVTYQVNKDPSGNVKIYCPFKNKDFTPEEISAQVIRKLTEGASKYLGEKITKAVITVPAYFNDSQRQATKDAGKIAGLDVLRIINEPTAASLAYGLDKKNNEKILVFDLGGGTFDVTILEIGDGIFEVLSTSGDTHLGGDDFDKKIVDWLVDEFKKSYNIDLSKDKQALQRLTEAAEKAKIELSSVSQTEINLPFITATSEGPIHFDKSLNRAKFEELVSELIARCKIPVENALKDAKLNKSDINEIVLVGGSTRIPAIQNLVKESLQKDPNQTVNPDEVVAVGAAIQGAVLAGEVKDILLLDVCPLSLGVETLGGVMTKMIPKNTTIPTRKTEIYSTAVDNQTNVEIHVLQGERELAKDNKSLGTFRLDGIPPAPRGVPQIEVTFDIDANGILSVTAKEKTTGKQQSVTITGASTLDKDEIQKIIKEAEINAQEDRKKKENIELKNQAETICYQAQKQLNEFKEKIDKNQYKRIEDLIAKLKQAISSNEYEEIKNLMEAIQKETMEIGKELYSKDSKNTKNSDVIDADFSET</sequence>
<geneLocation type="chloroplast"/>
<name>DNAK_CYACA</name>
<dbReference type="EMBL" id="AF022186">
    <property type="protein sequence ID" value="AAF12906.1"/>
    <property type="molecule type" value="Genomic_DNA"/>
</dbReference>
<dbReference type="RefSeq" id="NP_045188.1">
    <property type="nucleotide sequence ID" value="NC_001840.1"/>
</dbReference>
<dbReference type="SMR" id="Q9TLT1"/>
<dbReference type="GeneID" id="800254"/>
<dbReference type="GO" id="GO:0009507">
    <property type="term" value="C:chloroplast"/>
    <property type="evidence" value="ECO:0007669"/>
    <property type="project" value="UniProtKB-SubCell"/>
</dbReference>
<dbReference type="GO" id="GO:0005524">
    <property type="term" value="F:ATP binding"/>
    <property type="evidence" value="ECO:0007669"/>
    <property type="project" value="UniProtKB-UniRule"/>
</dbReference>
<dbReference type="GO" id="GO:0140662">
    <property type="term" value="F:ATP-dependent protein folding chaperone"/>
    <property type="evidence" value="ECO:0007669"/>
    <property type="project" value="InterPro"/>
</dbReference>
<dbReference type="GO" id="GO:0051082">
    <property type="term" value="F:unfolded protein binding"/>
    <property type="evidence" value="ECO:0007669"/>
    <property type="project" value="InterPro"/>
</dbReference>
<dbReference type="CDD" id="cd10234">
    <property type="entry name" value="ASKHA_NBD_HSP70_DnaK-like"/>
    <property type="match status" value="1"/>
</dbReference>
<dbReference type="FunFam" id="2.60.34.10:FF:000014">
    <property type="entry name" value="Chaperone protein DnaK HSP70"/>
    <property type="match status" value="1"/>
</dbReference>
<dbReference type="FunFam" id="1.20.1270.10:FF:000001">
    <property type="entry name" value="Molecular chaperone DnaK"/>
    <property type="match status" value="1"/>
</dbReference>
<dbReference type="FunFam" id="3.30.420.40:FF:000004">
    <property type="entry name" value="Molecular chaperone DnaK"/>
    <property type="match status" value="1"/>
</dbReference>
<dbReference type="FunFam" id="3.90.640.10:FF:000003">
    <property type="entry name" value="Molecular chaperone DnaK"/>
    <property type="match status" value="1"/>
</dbReference>
<dbReference type="Gene3D" id="1.20.1270.10">
    <property type="match status" value="1"/>
</dbReference>
<dbReference type="Gene3D" id="3.30.420.40">
    <property type="match status" value="2"/>
</dbReference>
<dbReference type="Gene3D" id="3.90.640.10">
    <property type="entry name" value="Actin, Chain A, domain 4"/>
    <property type="match status" value="1"/>
</dbReference>
<dbReference type="Gene3D" id="2.60.34.10">
    <property type="entry name" value="Substrate Binding Domain Of DNAk, Chain A, domain 1"/>
    <property type="match status" value="1"/>
</dbReference>
<dbReference type="HAMAP" id="MF_00332">
    <property type="entry name" value="DnaK"/>
    <property type="match status" value="1"/>
</dbReference>
<dbReference type="InterPro" id="IPR043129">
    <property type="entry name" value="ATPase_NBD"/>
</dbReference>
<dbReference type="InterPro" id="IPR012725">
    <property type="entry name" value="Chaperone_DnaK"/>
</dbReference>
<dbReference type="InterPro" id="IPR018181">
    <property type="entry name" value="Heat_shock_70_CS"/>
</dbReference>
<dbReference type="InterPro" id="IPR029048">
    <property type="entry name" value="HSP70_C_sf"/>
</dbReference>
<dbReference type="InterPro" id="IPR029047">
    <property type="entry name" value="HSP70_peptide-bd_sf"/>
</dbReference>
<dbReference type="InterPro" id="IPR013126">
    <property type="entry name" value="Hsp_70_fam"/>
</dbReference>
<dbReference type="NCBIfam" id="NF001413">
    <property type="entry name" value="PRK00290.1"/>
    <property type="match status" value="1"/>
</dbReference>
<dbReference type="NCBIfam" id="NF003520">
    <property type="entry name" value="PRK05183.1"/>
    <property type="match status" value="1"/>
</dbReference>
<dbReference type="NCBIfam" id="TIGR02350">
    <property type="entry name" value="prok_dnaK"/>
    <property type="match status" value="1"/>
</dbReference>
<dbReference type="PANTHER" id="PTHR19375">
    <property type="entry name" value="HEAT SHOCK PROTEIN 70KDA"/>
    <property type="match status" value="1"/>
</dbReference>
<dbReference type="Pfam" id="PF00012">
    <property type="entry name" value="HSP70"/>
    <property type="match status" value="1"/>
</dbReference>
<dbReference type="PRINTS" id="PR00301">
    <property type="entry name" value="HEATSHOCK70"/>
</dbReference>
<dbReference type="SUPFAM" id="SSF53067">
    <property type="entry name" value="Actin-like ATPase domain"/>
    <property type="match status" value="2"/>
</dbReference>
<dbReference type="SUPFAM" id="SSF100934">
    <property type="entry name" value="Heat shock protein 70kD (HSP70), C-terminal subdomain"/>
    <property type="match status" value="1"/>
</dbReference>
<dbReference type="SUPFAM" id="SSF100920">
    <property type="entry name" value="Heat shock protein 70kD (HSP70), peptide-binding domain"/>
    <property type="match status" value="1"/>
</dbReference>
<dbReference type="PROSITE" id="PS00297">
    <property type="entry name" value="HSP70_1"/>
    <property type="match status" value="1"/>
</dbReference>
<dbReference type="PROSITE" id="PS00329">
    <property type="entry name" value="HSP70_2"/>
    <property type="match status" value="1"/>
</dbReference>
<comment type="function">
    <text evidence="1">Acts as a chaperone.</text>
</comment>
<comment type="subcellular location">
    <subcellularLocation>
        <location>Plastid</location>
        <location>Chloroplast</location>
    </subcellularLocation>
</comment>
<comment type="similarity">
    <text evidence="2">Belongs to the heat shock protein 70 family.</text>
</comment>
<accession>Q9TLT1</accession>
<organism>
    <name type="scientific">Cyanidium caldarium</name>
    <name type="common">Red alga</name>
    <dbReference type="NCBI Taxonomy" id="2771"/>
    <lineage>
        <taxon>Eukaryota</taxon>
        <taxon>Rhodophyta</taxon>
        <taxon>Bangiophyceae</taxon>
        <taxon>Cyanidiales</taxon>
        <taxon>Cyanidiaceae</taxon>
        <taxon>Cyanidium</taxon>
    </lineage>
</organism>
<evidence type="ECO:0000250" key="1"/>
<evidence type="ECO:0000305" key="2"/>
<keyword id="KW-0067">ATP-binding</keyword>
<keyword id="KW-0143">Chaperone</keyword>
<keyword id="KW-0150">Chloroplast</keyword>
<keyword id="KW-0547">Nucleotide-binding</keyword>
<keyword id="KW-0934">Plastid</keyword>
<keyword id="KW-0346">Stress response</keyword>
<protein>
    <recommendedName>
        <fullName>Chaperone protein dnaK</fullName>
    </recommendedName>
    <alternativeName>
        <fullName>HSP70</fullName>
    </alternativeName>
    <alternativeName>
        <fullName>Heat shock 70 kDa protein</fullName>
    </alternativeName>
    <alternativeName>
        <fullName>Heat shock protein 70</fullName>
    </alternativeName>
</protein>
<feature type="chain" id="PRO_0000078605" description="Chaperone protein dnaK">
    <location>
        <begin position="1"/>
        <end position="618"/>
    </location>
</feature>
<proteinExistence type="inferred from homology"/>